<protein>
    <recommendedName>
        <fullName>Mitochondrial import receptor subunit TOM22</fullName>
    </recommendedName>
    <alternativeName>
        <fullName>Mitochondrial 17 kDa assembly protein</fullName>
    </alternativeName>
    <alternativeName>
        <fullName>Mitochondrial 22 kDa outer membrane protein</fullName>
    </alternativeName>
    <alternativeName>
        <fullName>Protein MAS17</fullName>
    </alternativeName>
    <alternativeName>
        <fullName>Translocase of outer membrane 22 kDa subunit</fullName>
    </alternativeName>
</protein>
<gene>
    <name type="primary">TOM22</name>
    <name type="synonym">MAS17</name>
    <name type="synonym">MAS22</name>
    <name type="synonym">MOM22</name>
    <name type="ordered locus">YNL131W</name>
    <name type="ORF">N1217</name>
    <name type="ORF">N1862</name>
</gene>
<accession>P49334</accession>
<accession>D6W151</accession>
<accession>Q36757</accession>
<reference key="1">
    <citation type="journal article" date="1995" name="Mol. Cell. Biol.">
        <title>The mitochondrial receptor complex: Mom22 is essential for cell viability and directly interacts with preproteins.</title>
        <authorList>
            <person name="Hoenlinger A."/>
            <person name="Kuebrich M."/>
            <person name="Moczko M."/>
            <person name="Gaertner F."/>
            <person name="Mallet L."/>
            <person name="Bussereau F."/>
            <person name="Eckerskorn C."/>
            <person name="Lottspeich F."/>
            <person name="Dietmeier K."/>
            <person name="Jacquet M."/>
            <person name="Pfanner N."/>
        </authorList>
    </citation>
    <scope>NUCLEOTIDE SEQUENCE [GENOMIC DNA]</scope>
    <scope>PROTEIN SEQUENCE OF 2-17</scope>
    <scope>FUNCTION</scope>
    <source>
        <strain>ATCC 204508 / S288c</strain>
    </source>
</reference>
<reference key="2">
    <citation type="journal article" date="1995" name="FEBS Lett.">
        <title>Identification of yeast MAS17 encoding the functional counterpart of the mitochondrial receptor complex protein MOM22 of Neurospora crassa.</title>
        <authorList>
            <person name="Nakai M."/>
            <person name="Endo T."/>
        </authorList>
    </citation>
    <scope>NUCLEOTIDE SEQUENCE [GENOMIC DNA]</scope>
    <source>
        <strain>SP1</strain>
    </source>
</reference>
<reference key="3">
    <citation type="journal article" date="1994" name="Proc. Natl. Acad. Sci. U.S.A.">
        <title>The mitochondrial outer membrane protein Mas22p is essential for protein import and viability of yeast.</title>
        <authorList>
            <person name="Lithgow T."/>
            <person name="Junne T."/>
            <person name="Suda K."/>
            <person name="Gratzer S."/>
            <person name="Schatz G."/>
        </authorList>
    </citation>
    <scope>NUCLEOTIDE SEQUENCE [GENOMIC DNA]</scope>
</reference>
<reference key="4">
    <citation type="journal article" date="1995" name="Yeast">
        <title>A 43.5 kb segment of yeast chromosome XIV, which contains MFA2, MEP2, CAP/SRV2, NAM9, FKB1/FPR1/RBP1, MOM22 and CPT1, predicts an adenosine deaminase gene and 14 new open reading frames.</title>
        <authorList>
            <person name="Mallet L."/>
            <person name="Bussereau F."/>
            <person name="Jacquet M."/>
        </authorList>
    </citation>
    <scope>NUCLEOTIDE SEQUENCE [GENOMIC DNA]</scope>
    <source>
        <strain>ATCC 204508 / S288c</strain>
    </source>
</reference>
<reference key="5">
    <citation type="journal article" date="1997" name="Nature">
        <title>The nucleotide sequence of Saccharomyces cerevisiae chromosome XIV and its evolutionary implications.</title>
        <authorList>
            <person name="Philippsen P."/>
            <person name="Kleine K."/>
            <person name="Poehlmann R."/>
            <person name="Duesterhoeft A."/>
            <person name="Hamberg K."/>
            <person name="Hegemann J.H."/>
            <person name="Obermaier B."/>
            <person name="Urrestarazu L.A."/>
            <person name="Aert R."/>
            <person name="Albermann K."/>
            <person name="Altmann R."/>
            <person name="Andre B."/>
            <person name="Baladron V."/>
            <person name="Ballesta J.P.G."/>
            <person name="Becam A.-M."/>
            <person name="Beinhauer J.D."/>
            <person name="Boskovic J."/>
            <person name="Buitrago M.J."/>
            <person name="Bussereau F."/>
            <person name="Coster F."/>
            <person name="Crouzet M."/>
            <person name="D'Angelo M."/>
            <person name="Dal Pero F."/>
            <person name="De Antoni A."/>
            <person name="del Rey F."/>
            <person name="Doignon F."/>
            <person name="Domdey H."/>
            <person name="Dubois E."/>
            <person name="Fiedler T.A."/>
            <person name="Fleig U."/>
            <person name="Floeth M."/>
            <person name="Fritz C."/>
            <person name="Gaillardin C."/>
            <person name="Garcia-Cantalejo J.M."/>
            <person name="Glansdorff N."/>
            <person name="Goffeau A."/>
            <person name="Gueldener U."/>
            <person name="Herbert C.J."/>
            <person name="Heumann K."/>
            <person name="Heuss-Neitzel D."/>
            <person name="Hilbert H."/>
            <person name="Hinni K."/>
            <person name="Iraqui Houssaini I."/>
            <person name="Jacquet M."/>
            <person name="Jimenez A."/>
            <person name="Jonniaux J.-L."/>
            <person name="Karpfinger-Hartl L."/>
            <person name="Lanfranchi G."/>
            <person name="Lepingle A."/>
            <person name="Levesque H."/>
            <person name="Lyck R."/>
            <person name="Maftahi M."/>
            <person name="Mallet L."/>
            <person name="Maurer C.T.C."/>
            <person name="Messenguy F."/>
            <person name="Mewes H.-W."/>
            <person name="Moestl D."/>
            <person name="Nasr F."/>
            <person name="Nicaud J.-M."/>
            <person name="Niedenthal R.K."/>
            <person name="Pandolfo D."/>
            <person name="Pierard A."/>
            <person name="Piravandi E."/>
            <person name="Planta R.J."/>
            <person name="Pohl T.M."/>
            <person name="Purnelle B."/>
            <person name="Rebischung C."/>
            <person name="Remacha M.A."/>
            <person name="Revuelta J.L."/>
            <person name="Rinke M."/>
            <person name="Saiz J.E."/>
            <person name="Sartorello F."/>
            <person name="Scherens B."/>
            <person name="Sen-Gupta M."/>
            <person name="Soler-Mira A."/>
            <person name="Urbanus J.H.M."/>
            <person name="Valle G."/>
            <person name="Van Dyck L."/>
            <person name="Verhasselt P."/>
            <person name="Vierendeels F."/>
            <person name="Vissers S."/>
            <person name="Voet M."/>
            <person name="Volckaert G."/>
            <person name="Wach A."/>
            <person name="Wambutt R."/>
            <person name="Wedler H."/>
            <person name="Zollner A."/>
            <person name="Hani J."/>
        </authorList>
    </citation>
    <scope>NUCLEOTIDE SEQUENCE [LARGE SCALE GENOMIC DNA]</scope>
    <source>
        <strain>ATCC 204508 / S288c</strain>
    </source>
</reference>
<reference key="6">
    <citation type="journal article" date="2014" name="G3 (Bethesda)">
        <title>The reference genome sequence of Saccharomyces cerevisiae: Then and now.</title>
        <authorList>
            <person name="Engel S.R."/>
            <person name="Dietrich F.S."/>
            <person name="Fisk D.G."/>
            <person name="Binkley G."/>
            <person name="Balakrishnan R."/>
            <person name="Costanzo M.C."/>
            <person name="Dwight S.S."/>
            <person name="Hitz B.C."/>
            <person name="Karra K."/>
            <person name="Nash R.S."/>
            <person name="Weng S."/>
            <person name="Wong E.D."/>
            <person name="Lloyd P."/>
            <person name="Skrzypek M.S."/>
            <person name="Miyasato S.R."/>
            <person name="Simison M."/>
            <person name="Cherry J.M."/>
        </authorList>
    </citation>
    <scope>GENOME REANNOTATION</scope>
    <source>
        <strain>ATCC 204508 / S288c</strain>
    </source>
</reference>
<reference key="7">
    <citation type="journal article" date="1998" name="Mol. Cell. Biol.">
        <title>Preprotein translocase of the outer mitochondrial membrane: molecular dissection and assembly of the general import pore complex.</title>
        <authorList>
            <person name="Dekker P.J.T."/>
            <person name="Ryan M.T."/>
            <person name="Brix J."/>
            <person name="Mueller H."/>
            <person name="Hoenlinger A."/>
            <person name="Pfanner N."/>
        </authorList>
    </citation>
    <scope>IDENTIFICATION IN THE TOM COMPLEX</scope>
</reference>
<reference key="8">
    <citation type="journal article" date="1999" name="Nature">
        <title>Tom22 is a multifunctional organizer of the mitochondrial preprotein translocase.</title>
        <authorList>
            <person name="van Wilpe S."/>
            <person name="Ryan M.T."/>
            <person name="Hill K."/>
            <person name="Maarse A.C."/>
            <person name="Meisinger C."/>
            <person name="Brix J."/>
            <person name="Dekker P.J.T."/>
            <person name="Moczko M."/>
            <person name="Wagner R."/>
            <person name="Meijer M."/>
            <person name="Guiard B."/>
            <person name="Hoenlinger A."/>
            <person name="Pfanner N."/>
        </authorList>
    </citation>
    <scope>FUNCTION</scope>
    <scope>INTERACTION WITH TOM20 AND TOM70</scope>
</reference>
<reference key="9">
    <citation type="journal article" date="2001" name="Nat. Struct. Biol.">
        <title>Multistep assembly of the protein import channel of the mitochondrial outer membrane.</title>
        <authorList>
            <person name="Model K."/>
            <person name="Meisinger C."/>
            <person name="Prinz T."/>
            <person name="Wiedemann N."/>
            <person name="Truscott K.N."/>
            <person name="Pfanner N."/>
            <person name="Ryan M.T."/>
        </authorList>
    </citation>
    <scope>FUNCTION</scope>
</reference>
<reference key="10">
    <citation type="journal article" date="2003" name="Nature">
        <title>Global analysis of protein expression in yeast.</title>
        <authorList>
            <person name="Ghaemmaghami S."/>
            <person name="Huh W.-K."/>
            <person name="Bower K."/>
            <person name="Howson R.W."/>
            <person name="Belle A."/>
            <person name="Dephoure N."/>
            <person name="O'Shea E.K."/>
            <person name="Weissman J.S."/>
        </authorList>
    </citation>
    <scope>LEVEL OF PROTEIN EXPRESSION [LARGE SCALE ANALYSIS]</scope>
</reference>
<reference key="11">
    <citation type="journal article" date="2008" name="Mol. Cell. Proteomics">
        <title>A multidimensional chromatography technology for in-depth phosphoproteome analysis.</title>
        <authorList>
            <person name="Albuquerque C.P."/>
            <person name="Smolka M.B."/>
            <person name="Payne S.H."/>
            <person name="Bafna V."/>
            <person name="Eng J."/>
            <person name="Zhou H."/>
        </authorList>
    </citation>
    <scope>PHOSPHORYLATION [LARGE SCALE ANALYSIS] AT SER-44 AND SER-46</scope>
    <scope>IDENTIFICATION BY MASS SPECTROMETRY [LARGE SCALE ANALYSIS]</scope>
</reference>
<reference key="12">
    <citation type="journal article" date="2009" name="Science">
        <title>Global analysis of Cdk1 substrate phosphorylation sites provides insights into evolution.</title>
        <authorList>
            <person name="Holt L.J."/>
            <person name="Tuch B.B."/>
            <person name="Villen J."/>
            <person name="Johnson A.D."/>
            <person name="Gygi S.P."/>
            <person name="Morgan D.O."/>
        </authorList>
    </citation>
    <scope>PHOSPHORYLATION [LARGE SCALE ANALYSIS] AT SER-44 AND SER-46</scope>
    <scope>IDENTIFICATION BY MASS SPECTROMETRY [LARGE SCALE ANALYSIS]</scope>
</reference>
<reference key="13">
    <citation type="journal article" date="2011" name="Dev. Cell">
        <title>Dual role of mitofilin in mitochondrial membrane organization and protein biogenesis.</title>
        <authorList>
            <person name="von der Malsburg K."/>
            <person name="Muller J.M."/>
            <person name="Bohnert M."/>
            <person name="Oeljeklaus S."/>
            <person name="Kwiatkowska P."/>
            <person name="Becker T."/>
            <person name="Loniewska-Lwowska A."/>
            <person name="Wiese S."/>
            <person name="Rao S."/>
            <person name="Milenkovic D."/>
            <person name="Hutu D.P."/>
            <person name="Zerbes R.M."/>
            <person name="Schulze-Specking A."/>
            <person name="Meyer H.E."/>
            <person name="Martinou J.C."/>
            <person name="Rospert S."/>
            <person name="Rehling P."/>
            <person name="Meisinger C."/>
            <person name="Veenhuis M."/>
            <person name="Warscheid B."/>
            <person name="van der Klei I.J."/>
            <person name="Pfanner N."/>
            <person name="Chacinska A."/>
            <person name="van der Laan M."/>
        </authorList>
    </citation>
    <scope>INTERACTION WITH FCJ1</scope>
</reference>
<reference key="14">
    <citation type="journal article" date="2012" name="Proc. Natl. Acad. Sci. U.S.A.">
        <title>N-terminal acetylome analyses and functional insights of the N-terminal acetyltransferase NatB.</title>
        <authorList>
            <person name="Van Damme P."/>
            <person name="Lasa M."/>
            <person name="Polevoda B."/>
            <person name="Gazquez C."/>
            <person name="Elosegui-Artola A."/>
            <person name="Kim D.S."/>
            <person name="De Juan-Pardo E."/>
            <person name="Demeyer K."/>
            <person name="Hole K."/>
            <person name="Larrea E."/>
            <person name="Timmerman E."/>
            <person name="Prieto J."/>
            <person name="Arnesen T."/>
            <person name="Sherman F."/>
            <person name="Gevaert K."/>
            <person name="Aldabe R."/>
        </authorList>
    </citation>
    <scope>IDENTIFICATION BY MASS SPECTROMETRY [LARGE SCALE ANALYSIS]</scope>
</reference>
<organism>
    <name type="scientific">Saccharomyces cerevisiae (strain ATCC 204508 / S288c)</name>
    <name type="common">Baker's yeast</name>
    <dbReference type="NCBI Taxonomy" id="559292"/>
    <lineage>
        <taxon>Eukaryota</taxon>
        <taxon>Fungi</taxon>
        <taxon>Dikarya</taxon>
        <taxon>Ascomycota</taxon>
        <taxon>Saccharomycotina</taxon>
        <taxon>Saccharomycetes</taxon>
        <taxon>Saccharomycetales</taxon>
        <taxon>Saccharomycetaceae</taxon>
        <taxon>Saccharomyces</taxon>
    </lineage>
</organism>
<sequence>MVELTEIKDDVVQLDEPQFSRNQAIVEEKASATNNDVVDDEDDSDSDFEDEFDENETLLDRIVALKDIVPPGKRQTISNFFGFTSSFVRNAFTKSGNLAWTLTTTALLLGVPLSLSILAEQQLIEMEKTFDLQSDANNILAQGEKDAAATAN</sequence>
<proteinExistence type="evidence at protein level"/>
<name>TOM22_YEAST</name>
<evidence type="ECO:0000255" key="1"/>
<evidence type="ECO:0000256" key="2">
    <source>
        <dbReference type="SAM" id="MobiDB-lite"/>
    </source>
</evidence>
<evidence type="ECO:0000269" key="3">
    <source>
    </source>
</evidence>
<evidence type="ECO:0000269" key="4">
    <source>
    </source>
</evidence>
<evidence type="ECO:0000269" key="5">
    <source>
    </source>
</evidence>
<evidence type="ECO:0000269" key="6">
    <source>
    </source>
</evidence>
<evidence type="ECO:0000269" key="7">
    <source>
    </source>
</evidence>
<evidence type="ECO:0000269" key="8">
    <source>
    </source>
</evidence>
<evidence type="ECO:0000305" key="9"/>
<evidence type="ECO:0007744" key="10">
    <source>
    </source>
</evidence>
<evidence type="ECO:0007744" key="11">
    <source>
    </source>
</evidence>
<evidence type="ECO:0007829" key="12">
    <source>
        <dbReference type="PDB" id="6UCU"/>
    </source>
</evidence>
<keyword id="KW-0002">3D-structure</keyword>
<keyword id="KW-0903">Direct protein sequencing</keyword>
<keyword id="KW-0472">Membrane</keyword>
<keyword id="KW-0496">Mitochondrion</keyword>
<keyword id="KW-1000">Mitochondrion outer membrane</keyword>
<keyword id="KW-0597">Phosphoprotein</keyword>
<keyword id="KW-0653">Protein transport</keyword>
<keyword id="KW-0675">Receptor</keyword>
<keyword id="KW-1185">Reference proteome</keyword>
<keyword id="KW-0811">Translocation</keyword>
<keyword id="KW-0812">Transmembrane</keyword>
<keyword id="KW-1133">Transmembrane helix</keyword>
<keyword id="KW-0813">Transport</keyword>
<feature type="initiator methionine" description="Removed" evidence="7">
    <location>
        <position position="1"/>
    </location>
</feature>
<feature type="chain" id="PRO_0000076113" description="Mitochondrial import receptor subunit TOM22">
    <location>
        <begin position="2"/>
        <end position="152"/>
    </location>
</feature>
<feature type="topological domain" description="Cytoplasmic" evidence="1">
    <location>
        <begin position="2"/>
        <end position="97"/>
    </location>
</feature>
<feature type="transmembrane region" description="Helical" evidence="1">
    <location>
        <begin position="98"/>
        <end position="119"/>
    </location>
</feature>
<feature type="topological domain" description="Mitochondrial intermembrane" evidence="1">
    <location>
        <begin position="120"/>
        <end position="152"/>
    </location>
</feature>
<feature type="region of interest" description="Disordered" evidence="2">
    <location>
        <begin position="27"/>
        <end position="49"/>
    </location>
</feature>
<feature type="compositionally biased region" description="Acidic residues" evidence="2">
    <location>
        <begin position="37"/>
        <end position="49"/>
    </location>
</feature>
<feature type="modified residue" description="Phosphoserine" evidence="10 11">
    <location>
        <position position="44"/>
    </location>
</feature>
<feature type="modified residue" description="Phosphoserine" evidence="10 11">
    <location>
        <position position="46"/>
    </location>
</feature>
<feature type="helix" evidence="12">
    <location>
        <begin position="87"/>
        <end position="134"/>
    </location>
</feature>
<comment type="function">
    <text evidence="3 4 7">Central component of the TOM (translocase of outer membrane) receptor complex responsible for the recognition and translocation of cytosolically synthesized mitochondrial preproteins. Together with TOM20 and TOM70 functions as the transit peptide receptor at the surface of the mitochondrion outer membrane and facilitates the movement of preproteins into the TOM40 translocation pore. Docks TOM20 and TOM70 for interaction with the general TOM40 import pore (GIP) complex. May regulate the TOM machinery organization, stability and channel gating.</text>
</comment>
<comment type="subunit">
    <text evidence="3 6 8">Forms part of the preprotein translocase complex of the outer mitochondrial membrane (TOM complex) which consists of at least 7 different proteins (TOM5, TOM6, TOM7, TOM20, TOM22, TOM40 and TOM70). Interacts with TOM20 and TOM70. Interacts with FCJ1.</text>
</comment>
<comment type="interaction">
    <interactant intactId="EBI-12527">
        <id>P49334</id>
    </interactant>
    <interactant intactId="EBI-28646">
        <id>P53969</id>
        <label>SAM50</label>
    </interactant>
    <organismsDiffer>false</organismsDiffer>
    <experiments>6</experiments>
</comment>
<comment type="interaction">
    <interactant intactId="EBI-12527">
        <id>P49334</id>
    </interactant>
    <interactant intactId="EBI-23128">
        <id>P53220</id>
        <label>TIM21</label>
    </interactant>
    <organismsDiffer>false</organismsDiffer>
    <experiments>2</experiments>
</comment>
<comment type="interaction">
    <interactant intactId="EBI-12527">
        <id>P49334</id>
    </interactant>
    <interactant intactId="EBI-12522">
        <id>P35180</id>
        <label>TOM20</label>
    </interactant>
    <organismsDiffer>false</organismsDiffer>
    <experiments>5</experiments>
</comment>
<comment type="interaction">
    <interactant intactId="EBI-12527">
        <id>P49334</id>
    </interactant>
    <interactant intactId="EBI-12539">
        <id>P23644</id>
        <label>TOM40</label>
    </interactant>
    <organismsDiffer>false</organismsDiffer>
    <experiments>9</experiments>
</comment>
<comment type="interaction">
    <interactant intactId="EBI-12527">
        <id>P49334</id>
    </interactant>
    <interactant intactId="EBI-516580">
        <id>Q07812</id>
        <label>BAX</label>
    </interactant>
    <organismsDiffer>true</organismsDiffer>
    <experiments>3</experiments>
</comment>
<comment type="subcellular location">
    <subcellularLocation>
        <location>Mitochondrion outer membrane</location>
        <topology>Single-pass type II membrane protein</topology>
    </subcellularLocation>
</comment>
<comment type="domain">
    <text>Its cytoplasmic domain associates with the cytoplasmic domains of TOM20 and TOM70. Its intermembrane space domain provides a trans binding site for presequences and the single membrane anchor is required for a stable interaction between the GIP complex proteins.</text>
</comment>
<comment type="miscellaneous">
    <text evidence="5">Present with 6610 molecules/cell in log phase SD medium.</text>
</comment>
<comment type="similarity">
    <text evidence="9">Belongs to the Tom22 family.</text>
</comment>
<dbReference type="EMBL" id="Z46843">
    <property type="protein sequence ID" value="CAA86894.1"/>
    <property type="molecule type" value="Genomic_DNA"/>
</dbReference>
<dbReference type="EMBL" id="X82405">
    <property type="protein sequence ID" value="CAA57799.1"/>
    <property type="molecule type" value="Genomic_DNA"/>
</dbReference>
<dbReference type="EMBL" id="X80348">
    <property type="protein sequence ID" value="CAA56588.1"/>
    <property type="status" value="ALT_SEQ"/>
    <property type="molecule type" value="Genomic_DNA"/>
</dbReference>
<dbReference type="EMBL" id="Z71407">
    <property type="protein sequence ID" value="CAA96013.1"/>
    <property type="molecule type" value="Genomic_DNA"/>
</dbReference>
<dbReference type="EMBL" id="BK006947">
    <property type="protein sequence ID" value="DAA10417.1"/>
    <property type="molecule type" value="Genomic_DNA"/>
</dbReference>
<dbReference type="PIR" id="S50250">
    <property type="entry name" value="S50250"/>
</dbReference>
<dbReference type="RefSeq" id="NP_014268.1">
    <property type="nucleotide sequence ID" value="NM_001182969.1"/>
</dbReference>
<dbReference type="PDB" id="6JNF">
    <property type="method" value="EM"/>
    <property type="resolution" value="3.81 A"/>
    <property type="chains" value="C/H=1-152"/>
</dbReference>
<dbReference type="PDB" id="6UCU">
    <property type="method" value="EM"/>
    <property type="resolution" value="3.06 A"/>
    <property type="chains" value="B/J=1-152"/>
</dbReference>
<dbReference type="PDB" id="6UCV">
    <property type="method" value="EM"/>
    <property type="resolution" value="4.10 A"/>
    <property type="chains" value="B/J/b/j=1-152"/>
</dbReference>
<dbReference type="PDB" id="8HCO">
    <property type="method" value="EM"/>
    <property type="resolution" value="4.10 A"/>
    <property type="chains" value="B/J=1-152"/>
</dbReference>
<dbReference type="PDB" id="8W5J">
    <property type="method" value="EM"/>
    <property type="resolution" value="4.40 A"/>
    <property type="chains" value="B/J=1-152"/>
</dbReference>
<dbReference type="PDB" id="8W5K">
    <property type="method" value="EM"/>
    <property type="resolution" value="3.60 A"/>
    <property type="chains" value="B/J=1-152"/>
</dbReference>
<dbReference type="PDB" id="8XKW">
    <property type="method" value="EM"/>
    <property type="resolution" value="3.64 A"/>
    <property type="chains" value="B/G=1-152"/>
</dbReference>
<dbReference type="PDB" id="8XKX">
    <property type="method" value="EM"/>
    <property type="resolution" value="3.70 A"/>
    <property type="chains" value="B/G=1-152"/>
</dbReference>
<dbReference type="PDB" id="8XKY">
    <property type="method" value="EM"/>
    <property type="resolution" value="3.42 A"/>
    <property type="chains" value="B/G=1-152"/>
</dbReference>
<dbReference type="PDBsum" id="6JNF"/>
<dbReference type="PDBsum" id="6UCU"/>
<dbReference type="PDBsum" id="6UCV"/>
<dbReference type="PDBsum" id="8HCO"/>
<dbReference type="PDBsum" id="8W5J"/>
<dbReference type="PDBsum" id="8W5K"/>
<dbReference type="PDBsum" id="8XKW"/>
<dbReference type="PDBsum" id="8XKX"/>
<dbReference type="PDBsum" id="8XKY"/>
<dbReference type="EMDB" id="EMD-20728"/>
<dbReference type="EMDB" id="EMD-20729"/>
<dbReference type="EMDB" id="EMD-34660"/>
<dbReference type="EMDB" id="EMD-37294"/>
<dbReference type="EMDB" id="EMD-37295"/>
<dbReference type="EMDB" id="EMD-38429"/>
<dbReference type="EMDB" id="EMD-38430"/>
<dbReference type="EMDB" id="EMD-38431"/>
<dbReference type="EMDB" id="EMD-9851"/>
<dbReference type="SMR" id="P49334"/>
<dbReference type="BioGRID" id="35696">
    <property type="interactions" value="349"/>
</dbReference>
<dbReference type="ComplexPortal" id="CPX-473">
    <property type="entry name" value="TOM40 mitochondrial outer membrane translocase core complex"/>
</dbReference>
<dbReference type="ComplexPortal" id="CPX-474">
    <property type="entry name" value="TOM40 mitochondrial outer membrane translocase holocomplex"/>
</dbReference>
<dbReference type="DIP" id="DIP-2302N"/>
<dbReference type="FunCoup" id="P49334">
    <property type="interactions" value="367"/>
</dbReference>
<dbReference type="IntAct" id="P49334">
    <property type="interactions" value="45"/>
</dbReference>
<dbReference type="MINT" id="P49334"/>
<dbReference type="STRING" id="4932.YNL131W"/>
<dbReference type="TCDB" id="3.A.8.1.1">
    <property type="family name" value="the mitochondrial protein translocase (mpt) family"/>
</dbReference>
<dbReference type="iPTMnet" id="P49334"/>
<dbReference type="PaxDb" id="4932-YNL131W"/>
<dbReference type="PeptideAtlas" id="P49334"/>
<dbReference type="EnsemblFungi" id="YNL131W_mRNA">
    <property type="protein sequence ID" value="YNL131W"/>
    <property type="gene ID" value="YNL131W"/>
</dbReference>
<dbReference type="GeneID" id="855592"/>
<dbReference type="KEGG" id="sce:YNL131W"/>
<dbReference type="AGR" id="SGD:S000005075"/>
<dbReference type="SGD" id="S000005075">
    <property type="gene designation" value="TOM22"/>
</dbReference>
<dbReference type="VEuPathDB" id="FungiDB:YNL131W"/>
<dbReference type="eggNOG" id="KOG4111">
    <property type="taxonomic scope" value="Eukaryota"/>
</dbReference>
<dbReference type="GeneTree" id="ENSGT00390000016475"/>
<dbReference type="HOGENOM" id="CLU_094333_2_0_1"/>
<dbReference type="InParanoid" id="P49334"/>
<dbReference type="OMA" id="LVWIVTT"/>
<dbReference type="OrthoDB" id="10016939at2759"/>
<dbReference type="BioCyc" id="YEAST:G3O-33151-MONOMER"/>
<dbReference type="BioGRID-ORCS" id="855592">
    <property type="hits" value="0 hits in 10 CRISPR screens"/>
</dbReference>
<dbReference type="PRO" id="PR:P49334"/>
<dbReference type="Proteomes" id="UP000002311">
    <property type="component" value="Chromosome XIV"/>
</dbReference>
<dbReference type="RNAct" id="P49334">
    <property type="molecule type" value="protein"/>
</dbReference>
<dbReference type="GO" id="GO:0005741">
    <property type="term" value="C:mitochondrial outer membrane"/>
    <property type="evidence" value="ECO:0000314"/>
    <property type="project" value="SGD"/>
</dbReference>
<dbReference type="GO" id="GO:0005742">
    <property type="term" value="C:mitochondrial outer membrane translocase complex"/>
    <property type="evidence" value="ECO:0000314"/>
    <property type="project" value="SGD"/>
</dbReference>
<dbReference type="GO" id="GO:0005739">
    <property type="term" value="C:mitochondrion"/>
    <property type="evidence" value="ECO:0007005"/>
    <property type="project" value="SGD"/>
</dbReference>
<dbReference type="GO" id="GO:0030150">
    <property type="term" value="P:protein import into mitochondrial matrix"/>
    <property type="evidence" value="ECO:0000315"/>
    <property type="project" value="SGD"/>
</dbReference>
<dbReference type="GO" id="GO:0045040">
    <property type="term" value="P:protein insertion into mitochondrial outer membrane"/>
    <property type="evidence" value="ECO:0000314"/>
    <property type="project" value="ComplexPortal"/>
</dbReference>
<dbReference type="CDD" id="cd22884">
    <property type="entry name" value="TOM22"/>
    <property type="match status" value="1"/>
</dbReference>
<dbReference type="InterPro" id="IPR005683">
    <property type="entry name" value="Tom22"/>
</dbReference>
<dbReference type="InterPro" id="IPR020951">
    <property type="entry name" value="Tom22_fungi"/>
</dbReference>
<dbReference type="NCBIfam" id="TIGR00986">
    <property type="entry name" value="3a0801s05tom22"/>
    <property type="match status" value="1"/>
</dbReference>
<dbReference type="PANTHER" id="PTHR12504">
    <property type="entry name" value="MITOCHONDRIAL IMPORT RECEPTOR SUBUNIT TOM22"/>
    <property type="match status" value="1"/>
</dbReference>
<dbReference type="PANTHER" id="PTHR12504:SF0">
    <property type="entry name" value="MITOCHONDRIAL IMPORT RECEPTOR SUBUNIT TOM22 HOMOLOG"/>
    <property type="match status" value="1"/>
</dbReference>
<dbReference type="Pfam" id="PF04281">
    <property type="entry name" value="Tom22"/>
    <property type="match status" value="1"/>
</dbReference>